<feature type="chain" id="PRO_0000357772" description="NADH-quinone oxidoreductase subunit D">
    <location>
        <begin position="1"/>
        <end position="396"/>
    </location>
</feature>
<accession>Q6G391</accession>
<evidence type="ECO:0000255" key="1">
    <source>
        <dbReference type="HAMAP-Rule" id="MF_01358"/>
    </source>
</evidence>
<name>NUOD_BARHE</name>
<keyword id="KW-0997">Cell inner membrane</keyword>
<keyword id="KW-1003">Cell membrane</keyword>
<keyword id="KW-0472">Membrane</keyword>
<keyword id="KW-0520">NAD</keyword>
<keyword id="KW-0874">Quinone</keyword>
<keyword id="KW-1278">Translocase</keyword>
<keyword id="KW-0813">Transport</keyword>
<keyword id="KW-0830">Ubiquinone</keyword>
<organism>
    <name type="scientific">Bartonella henselae (strain ATCC 49882 / DSM 28221 / CCUG 30454 / Houston 1)</name>
    <name type="common">Rochalimaea henselae</name>
    <dbReference type="NCBI Taxonomy" id="283166"/>
    <lineage>
        <taxon>Bacteria</taxon>
        <taxon>Pseudomonadati</taxon>
        <taxon>Pseudomonadota</taxon>
        <taxon>Alphaproteobacteria</taxon>
        <taxon>Hyphomicrobiales</taxon>
        <taxon>Bartonellaceae</taxon>
        <taxon>Bartonella</taxon>
    </lineage>
</organism>
<reference key="1">
    <citation type="journal article" date="2004" name="Proc. Natl. Acad. Sci. U.S.A.">
        <title>The louse-borne human pathogen Bartonella quintana is a genomic derivative of the zoonotic agent Bartonella henselae.</title>
        <authorList>
            <person name="Alsmark U.C.M."/>
            <person name="Frank A.C."/>
            <person name="Karlberg E.O."/>
            <person name="Legault B.-A."/>
            <person name="Ardell D.H."/>
            <person name="Canbaeck B."/>
            <person name="Eriksson A.-S."/>
            <person name="Naeslund A.K."/>
            <person name="Handley S.A."/>
            <person name="Huvet M."/>
            <person name="La Scola B."/>
            <person name="Holmberg M."/>
            <person name="Andersson S.G.E."/>
        </authorList>
    </citation>
    <scope>NUCLEOTIDE SEQUENCE [LARGE SCALE GENOMIC DNA]</scope>
    <source>
        <strain>ATCC 49882 / DSM 28221 / CCUG 30454 / Houston 1</strain>
    </source>
</reference>
<comment type="function">
    <text evidence="1">NDH-1 shuttles electrons from NADH, via FMN and iron-sulfur (Fe-S) centers, to quinones in the respiratory chain. The immediate electron acceptor for the enzyme in this species is believed to be ubiquinone. Couples the redox reaction to proton translocation (for every two electrons transferred, four hydrogen ions are translocated across the cytoplasmic membrane), and thus conserves the redox energy in a proton gradient.</text>
</comment>
<comment type="catalytic activity">
    <reaction evidence="1">
        <text>a quinone + NADH + 5 H(+)(in) = a quinol + NAD(+) + 4 H(+)(out)</text>
        <dbReference type="Rhea" id="RHEA:57888"/>
        <dbReference type="ChEBI" id="CHEBI:15378"/>
        <dbReference type="ChEBI" id="CHEBI:24646"/>
        <dbReference type="ChEBI" id="CHEBI:57540"/>
        <dbReference type="ChEBI" id="CHEBI:57945"/>
        <dbReference type="ChEBI" id="CHEBI:132124"/>
    </reaction>
</comment>
<comment type="subunit">
    <text evidence="1">NDH-1 is composed of 14 different subunits. Subunits NuoB, C, D, E, F, and G constitute the peripheral sector of the complex.</text>
</comment>
<comment type="subcellular location">
    <subcellularLocation>
        <location evidence="1">Cell inner membrane</location>
        <topology evidence="1">Peripheral membrane protein</topology>
        <orientation evidence="1">Cytoplasmic side</orientation>
    </subcellularLocation>
</comment>
<comment type="similarity">
    <text evidence="1">Belongs to the complex I 49 kDa subunit family.</text>
</comment>
<sequence>MAEVNVRNFNINFGPQHPAAHGVLRMVLELDGEVVERVDPHIGLLHRGTEKLMETKTYLQAGPYLDRLDYVAPMNQEHAFVLAIEKLLGVEVPKRGQLIRVLFSEIGRILNHLLNVTTQAMDVGALTPPLWGFEQRERLMIFYERACGARLHANYFRPGGVHQDLPESLVEDIGNFIDPFLIALGKLDALITPNRIFKQRNVDIGVVSIDEAWARGFSGVMIRGAGVPWDLRKSQPYECYDEMEFDIPVGKNSDCYDRYLIRMEEMRQSAKIMRQCVDRLLSTEKNEPVSSLDRKIVPPKRCEMKSSMEALIHHFKLYTEGFRTPPGEVYVAVEAPKGEFGVYLVSDGTNKPYRVKLRAPGFAHLQAMDFLTRGHMLADATAILGSIDIVFGEVDR</sequence>
<dbReference type="EC" id="7.1.1.-" evidence="1"/>
<dbReference type="EMBL" id="BX897699">
    <property type="protein sequence ID" value="CAF27690.1"/>
    <property type="molecule type" value="Genomic_DNA"/>
</dbReference>
<dbReference type="RefSeq" id="WP_011180785.1">
    <property type="nucleotide sequence ID" value="NZ_LRIJ02000001.1"/>
</dbReference>
<dbReference type="SMR" id="Q6G391"/>
<dbReference type="PaxDb" id="283166-BH08920"/>
<dbReference type="EnsemblBacteria" id="CAF27690">
    <property type="protein sequence ID" value="CAF27690"/>
    <property type="gene ID" value="BH08920"/>
</dbReference>
<dbReference type="KEGG" id="bhe:BH08920"/>
<dbReference type="eggNOG" id="COG0649">
    <property type="taxonomic scope" value="Bacteria"/>
</dbReference>
<dbReference type="OrthoDB" id="9801496at2"/>
<dbReference type="Proteomes" id="UP000000421">
    <property type="component" value="Chromosome"/>
</dbReference>
<dbReference type="GO" id="GO:0005886">
    <property type="term" value="C:plasma membrane"/>
    <property type="evidence" value="ECO:0007669"/>
    <property type="project" value="UniProtKB-SubCell"/>
</dbReference>
<dbReference type="GO" id="GO:0051287">
    <property type="term" value="F:NAD binding"/>
    <property type="evidence" value="ECO:0007669"/>
    <property type="project" value="InterPro"/>
</dbReference>
<dbReference type="GO" id="GO:0050136">
    <property type="term" value="F:NADH:ubiquinone reductase (non-electrogenic) activity"/>
    <property type="evidence" value="ECO:0007669"/>
    <property type="project" value="UniProtKB-UniRule"/>
</dbReference>
<dbReference type="GO" id="GO:0048038">
    <property type="term" value="F:quinone binding"/>
    <property type="evidence" value="ECO:0007669"/>
    <property type="project" value="UniProtKB-KW"/>
</dbReference>
<dbReference type="FunFam" id="1.10.645.10:FF:000005">
    <property type="entry name" value="NADH-quinone oxidoreductase subunit D"/>
    <property type="match status" value="1"/>
</dbReference>
<dbReference type="Gene3D" id="1.10.645.10">
    <property type="entry name" value="Cytochrome-c3 Hydrogenase, chain B"/>
    <property type="match status" value="1"/>
</dbReference>
<dbReference type="HAMAP" id="MF_01358">
    <property type="entry name" value="NDH1_NuoD"/>
    <property type="match status" value="1"/>
</dbReference>
<dbReference type="InterPro" id="IPR001135">
    <property type="entry name" value="NADH_Q_OxRdtase_suD"/>
</dbReference>
<dbReference type="InterPro" id="IPR014029">
    <property type="entry name" value="NADH_UbQ_OxRdtase_49kDa_CS"/>
</dbReference>
<dbReference type="InterPro" id="IPR022885">
    <property type="entry name" value="NDH1_su_D/H"/>
</dbReference>
<dbReference type="InterPro" id="IPR029014">
    <property type="entry name" value="NiFe-Hase_large"/>
</dbReference>
<dbReference type="NCBIfam" id="TIGR01962">
    <property type="entry name" value="NuoD"/>
    <property type="match status" value="1"/>
</dbReference>
<dbReference type="NCBIfam" id="NF004739">
    <property type="entry name" value="PRK06075.1"/>
    <property type="match status" value="1"/>
</dbReference>
<dbReference type="PANTHER" id="PTHR11993:SF10">
    <property type="entry name" value="NADH DEHYDROGENASE [UBIQUINONE] IRON-SULFUR PROTEIN 2, MITOCHONDRIAL"/>
    <property type="match status" value="1"/>
</dbReference>
<dbReference type="PANTHER" id="PTHR11993">
    <property type="entry name" value="NADH-UBIQUINONE OXIDOREDUCTASE 49 KDA SUBUNIT"/>
    <property type="match status" value="1"/>
</dbReference>
<dbReference type="Pfam" id="PF00346">
    <property type="entry name" value="Complex1_49kDa"/>
    <property type="match status" value="1"/>
</dbReference>
<dbReference type="SUPFAM" id="SSF56762">
    <property type="entry name" value="HydB/Nqo4-like"/>
    <property type="match status" value="1"/>
</dbReference>
<dbReference type="PROSITE" id="PS00535">
    <property type="entry name" value="COMPLEX1_49K"/>
    <property type="match status" value="1"/>
</dbReference>
<proteinExistence type="inferred from homology"/>
<protein>
    <recommendedName>
        <fullName evidence="1">NADH-quinone oxidoreductase subunit D</fullName>
        <ecNumber evidence="1">7.1.1.-</ecNumber>
    </recommendedName>
    <alternativeName>
        <fullName evidence="1">NADH dehydrogenase I subunit D</fullName>
    </alternativeName>
    <alternativeName>
        <fullName evidence="1">NDH-1 subunit D</fullName>
    </alternativeName>
</protein>
<gene>
    <name evidence="1" type="primary">nuoD</name>
    <name type="ordered locus">BH08920</name>
</gene>